<gene>
    <name type="primary">KDM5B</name>
    <name type="synonym">JARID1B</name>
    <name type="ORF">RCJMB04_9d3</name>
</gene>
<comment type="function">
    <text evidence="3 4">Histone demethylase that demethylates 'Lys-4' of histone H3, thereby playing a central role in histone code. Does not demethylate histone H3 'Lys-9' or H3 'Lys-27'. Demethylates trimethylated, dimethylated and monomethylated H3 'Lys-4'. Acts as a transcriptional corepressor. May repress the CLOCK-BMAL1 heterodimer-mediated transcriptional activation of the core clock component PER2.</text>
</comment>
<comment type="catalytic activity">
    <reaction evidence="3">
        <text>N(6),N(6),N(6)-trimethyl-L-lysyl(4)-[histone H3] + 3 2-oxoglutarate + 3 O2 = L-lysyl(4)-[histone H3] + 3 formaldehyde + 3 succinate + 3 CO2</text>
        <dbReference type="Rhea" id="RHEA:60208"/>
        <dbReference type="Rhea" id="RHEA-COMP:15537"/>
        <dbReference type="Rhea" id="RHEA-COMP:15547"/>
        <dbReference type="ChEBI" id="CHEBI:15379"/>
        <dbReference type="ChEBI" id="CHEBI:16526"/>
        <dbReference type="ChEBI" id="CHEBI:16810"/>
        <dbReference type="ChEBI" id="CHEBI:16842"/>
        <dbReference type="ChEBI" id="CHEBI:29969"/>
        <dbReference type="ChEBI" id="CHEBI:30031"/>
        <dbReference type="ChEBI" id="CHEBI:61961"/>
        <dbReference type="EC" id="1.14.11.67"/>
    </reaction>
</comment>
<comment type="cofactor">
    <cofactor evidence="1">
        <name>Fe(2+)</name>
        <dbReference type="ChEBI" id="CHEBI:29033"/>
    </cofactor>
    <text evidence="1">Binds 1 Fe(2+) ion per subunit.</text>
</comment>
<comment type="subcellular location">
    <subcellularLocation>
        <location evidence="6 7">Nucleus</location>
    </subcellularLocation>
</comment>
<comment type="domain">
    <text evidence="1 4">Both the JmjC domain and the JmjN domain are required for enzymatic activity (By similarity). However ARID and PHD-type 1 domain are not required for activity per se but contributed to recognition of the H3(1-21)K4me2 substrate peptide (By similarity).</text>
</comment>
<comment type="domain">
    <text evidence="1">The 2 first PHD-type zinc finger domains are required for transcription repression activity.</text>
</comment>
<comment type="similarity">
    <text evidence="10">Belongs to the JARID1 histone demethylase family.</text>
</comment>
<reference key="1">
    <citation type="journal article" date="2005" name="Genome Biol.">
        <title>Full-length cDNAs from chicken bursal lymphocytes to facilitate gene function analysis.</title>
        <authorList>
            <person name="Caldwell R.B."/>
            <person name="Kierzek A.M."/>
            <person name="Arakawa H."/>
            <person name="Bezzubov Y."/>
            <person name="Zaim J."/>
            <person name="Fiedler P."/>
            <person name="Kutter S."/>
            <person name="Blagodatski A."/>
            <person name="Kostovska D."/>
            <person name="Koter M."/>
            <person name="Plachy J."/>
            <person name="Carninci P."/>
            <person name="Hayashizaki Y."/>
            <person name="Buerstedde J.-M."/>
        </authorList>
    </citation>
    <scope>NUCLEOTIDE SEQUENCE [LARGE SCALE MRNA]</scope>
    <source>
        <strain>CB</strain>
        <tissue>Bursa of Fabricius</tissue>
    </source>
</reference>
<feature type="chain" id="PRO_0000292414" description="Lysine-specific demethylase 5B">
    <location>
        <begin position="1"/>
        <end position="1522"/>
    </location>
</feature>
<feature type="domain" description="JmjN" evidence="7">
    <location>
        <begin position="10"/>
        <end position="51"/>
    </location>
</feature>
<feature type="domain" description="ARID" evidence="6">
    <location>
        <begin position="75"/>
        <end position="165"/>
    </location>
</feature>
<feature type="domain" description="JmjC" evidence="8">
    <location>
        <begin position="428"/>
        <end position="594"/>
    </location>
</feature>
<feature type="zinc finger region" description="PHD-type 1" evidence="5">
    <location>
        <begin position="284"/>
        <end position="334"/>
    </location>
</feature>
<feature type="zinc finger region" description="C5HC2" evidence="4">
    <location>
        <begin position="667"/>
        <end position="719"/>
    </location>
</feature>
<feature type="zinc finger region" description="PHD-type 2" evidence="5">
    <location>
        <begin position="1151"/>
        <end position="1199"/>
    </location>
</feature>
<feature type="zinc finger region" description="PHD-type 3" evidence="5">
    <location>
        <begin position="1462"/>
        <end position="1516"/>
    </location>
</feature>
<feature type="region of interest" description="Disordered" evidence="9">
    <location>
        <begin position="180"/>
        <end position="229"/>
    </location>
</feature>
<feature type="region of interest" description="Disordered" evidence="9">
    <location>
        <begin position="1353"/>
        <end position="1373"/>
    </location>
</feature>
<feature type="region of interest" description="Disordered" evidence="9">
    <location>
        <begin position="1400"/>
        <end position="1460"/>
    </location>
</feature>
<feature type="compositionally biased region" description="Basic and acidic residues" evidence="9">
    <location>
        <begin position="180"/>
        <end position="192"/>
    </location>
</feature>
<feature type="compositionally biased region" description="Polar residues" evidence="9">
    <location>
        <begin position="1353"/>
        <end position="1365"/>
    </location>
</feature>
<feature type="compositionally biased region" description="Basic residues" evidence="9">
    <location>
        <begin position="1400"/>
        <end position="1416"/>
    </location>
</feature>
<feature type="compositionally biased region" description="Basic and acidic residues" evidence="9">
    <location>
        <begin position="1426"/>
        <end position="1442"/>
    </location>
</feature>
<feature type="binding site" evidence="2">
    <location>
        <position position="400"/>
    </location>
    <ligand>
        <name>2-oxoglutarate</name>
        <dbReference type="ChEBI" id="CHEBI:16810"/>
    </ligand>
</feature>
<feature type="binding site" evidence="8">
    <location>
        <position position="474"/>
    </location>
    <ligand>
        <name>Fe cation</name>
        <dbReference type="ChEBI" id="CHEBI:24875"/>
        <note>catalytic</note>
    </ligand>
</feature>
<feature type="binding site" evidence="2">
    <location>
        <position position="476"/>
    </location>
    <ligand>
        <name>Fe cation</name>
        <dbReference type="ChEBI" id="CHEBI:24875"/>
        <note>catalytic</note>
    </ligand>
</feature>
<feature type="binding site" evidence="2">
    <location>
        <position position="482"/>
    </location>
    <ligand>
        <name>2-oxoglutarate</name>
        <dbReference type="ChEBI" id="CHEBI:16810"/>
    </ligand>
</feature>
<feature type="binding site" evidence="2">
    <location>
        <position position="484"/>
    </location>
    <ligand>
        <name>2-oxoglutarate</name>
        <dbReference type="ChEBI" id="CHEBI:16810"/>
    </ligand>
</feature>
<feature type="binding site" evidence="2">
    <location>
        <position position="492"/>
    </location>
    <ligand>
        <name>2-oxoglutarate</name>
        <dbReference type="ChEBI" id="CHEBI:16810"/>
    </ligand>
</feature>
<feature type="binding site" evidence="8">
    <location>
        <position position="562"/>
    </location>
    <ligand>
        <name>Fe cation</name>
        <dbReference type="ChEBI" id="CHEBI:24875"/>
        <note>catalytic</note>
    </ligand>
</feature>
<protein>
    <recommendedName>
        <fullName>Lysine-specific demethylase 5B</fullName>
        <ecNumber evidence="3">1.14.11.67</ecNumber>
    </recommendedName>
    <alternativeName>
        <fullName>Histone demethylase JARID1B</fullName>
    </alternativeName>
    <alternativeName>
        <fullName>Jumonji/ARID domain-containing protein 1B</fullName>
    </alternativeName>
    <alternativeName>
        <fullName evidence="10">[histone H3]-trimethyl-L-lysine(4) demethylase 5B</fullName>
    </alternativeName>
</protein>
<keyword id="KW-0090">Biological rhythms</keyword>
<keyword id="KW-0156">Chromatin regulator</keyword>
<keyword id="KW-0223">Dioxygenase</keyword>
<keyword id="KW-0408">Iron</keyword>
<keyword id="KW-0479">Metal-binding</keyword>
<keyword id="KW-0539">Nucleus</keyword>
<keyword id="KW-0560">Oxidoreductase</keyword>
<keyword id="KW-1185">Reference proteome</keyword>
<keyword id="KW-0677">Repeat</keyword>
<keyword id="KW-0678">Repressor</keyword>
<keyword id="KW-0804">Transcription</keyword>
<keyword id="KW-0805">Transcription regulation</keyword>
<keyword id="KW-0862">Zinc</keyword>
<keyword id="KW-0863">Zinc-finger</keyword>
<organism>
    <name type="scientific">Gallus gallus</name>
    <name type="common">Chicken</name>
    <dbReference type="NCBI Taxonomy" id="9031"/>
    <lineage>
        <taxon>Eukaryota</taxon>
        <taxon>Metazoa</taxon>
        <taxon>Chordata</taxon>
        <taxon>Craniata</taxon>
        <taxon>Vertebrata</taxon>
        <taxon>Euteleostomi</taxon>
        <taxon>Archelosauria</taxon>
        <taxon>Archosauria</taxon>
        <taxon>Dinosauria</taxon>
        <taxon>Saurischia</taxon>
        <taxon>Theropoda</taxon>
        <taxon>Coelurosauria</taxon>
        <taxon>Aves</taxon>
        <taxon>Neognathae</taxon>
        <taxon>Galloanserae</taxon>
        <taxon>Galliformes</taxon>
        <taxon>Phasianidae</taxon>
        <taxon>Phasianinae</taxon>
        <taxon>Gallus</taxon>
    </lineage>
</organism>
<name>KDM5B_CHICK</name>
<proteinExistence type="evidence at transcript level"/>
<dbReference type="EC" id="1.14.11.67" evidence="3"/>
<dbReference type="EMBL" id="AJ851588">
    <property type="protein sequence ID" value="CAH65222.1"/>
    <property type="molecule type" value="mRNA"/>
</dbReference>
<dbReference type="RefSeq" id="NP_001026200.1">
    <property type="nucleotide sequence ID" value="NM_001031029.2"/>
</dbReference>
<dbReference type="BMRB" id="Q5F3R2"/>
<dbReference type="SMR" id="Q5F3R2"/>
<dbReference type="FunCoup" id="Q5F3R2">
    <property type="interactions" value="3283"/>
</dbReference>
<dbReference type="STRING" id="9031.ENSGALP00000045209"/>
<dbReference type="PaxDb" id="9031-ENSGALP00000000581"/>
<dbReference type="GeneID" id="421168"/>
<dbReference type="KEGG" id="gga:421168"/>
<dbReference type="CTD" id="10765"/>
<dbReference type="VEuPathDB" id="HostDB:geneid_421168"/>
<dbReference type="eggNOG" id="KOG1246">
    <property type="taxonomic scope" value="Eukaryota"/>
</dbReference>
<dbReference type="InParanoid" id="Q5F3R2"/>
<dbReference type="OMA" id="PRCDIGM"/>
<dbReference type="OrthoDB" id="1678912at2759"/>
<dbReference type="PhylomeDB" id="Q5F3R2"/>
<dbReference type="Reactome" id="R-GGA-8866911">
    <property type="pathway name" value="TFAP2 (AP-2) family regulates transcription of cell cycle factors"/>
</dbReference>
<dbReference type="PRO" id="PR:Q5F3R2"/>
<dbReference type="Proteomes" id="UP000000539">
    <property type="component" value="Chromosome 26"/>
</dbReference>
<dbReference type="Bgee" id="ENSGALG00000038948">
    <property type="expression patterns" value="Expressed in testis and 12 other cell types or tissues"/>
</dbReference>
<dbReference type="GO" id="GO:0000785">
    <property type="term" value="C:chromatin"/>
    <property type="evidence" value="ECO:0000318"/>
    <property type="project" value="GO_Central"/>
</dbReference>
<dbReference type="GO" id="GO:0005634">
    <property type="term" value="C:nucleus"/>
    <property type="evidence" value="ECO:0000318"/>
    <property type="project" value="GO_Central"/>
</dbReference>
<dbReference type="GO" id="GO:0003677">
    <property type="term" value="F:DNA binding"/>
    <property type="evidence" value="ECO:0007669"/>
    <property type="project" value="InterPro"/>
</dbReference>
<dbReference type="GO" id="GO:0042393">
    <property type="term" value="F:histone binding"/>
    <property type="evidence" value="ECO:0000250"/>
    <property type="project" value="UniProtKB"/>
</dbReference>
<dbReference type="GO" id="GO:0032453">
    <property type="term" value="F:histone H3K4 demethylase activity"/>
    <property type="evidence" value="ECO:0000250"/>
    <property type="project" value="UniProtKB"/>
</dbReference>
<dbReference type="GO" id="GO:0034647">
    <property type="term" value="F:histone H3K4me/H3K4me2/H3K4me3 demethylase activity"/>
    <property type="evidence" value="ECO:0000250"/>
    <property type="project" value="UniProtKB"/>
</dbReference>
<dbReference type="GO" id="GO:0008270">
    <property type="term" value="F:zinc ion binding"/>
    <property type="evidence" value="ECO:0000250"/>
    <property type="project" value="UniProtKB"/>
</dbReference>
<dbReference type="GO" id="GO:0006338">
    <property type="term" value="P:chromatin remodeling"/>
    <property type="evidence" value="ECO:0000318"/>
    <property type="project" value="GO_Central"/>
</dbReference>
<dbReference type="GO" id="GO:0006355">
    <property type="term" value="P:regulation of DNA-templated transcription"/>
    <property type="evidence" value="ECO:0000318"/>
    <property type="project" value="GO_Central"/>
</dbReference>
<dbReference type="GO" id="GO:0048511">
    <property type="term" value="P:rhythmic process"/>
    <property type="evidence" value="ECO:0007669"/>
    <property type="project" value="UniProtKB-KW"/>
</dbReference>
<dbReference type="CDD" id="cd16874">
    <property type="entry name" value="ARID_KDM5B"/>
    <property type="match status" value="1"/>
</dbReference>
<dbReference type="CDD" id="cd15603">
    <property type="entry name" value="PHD1_KDM5B"/>
    <property type="match status" value="1"/>
</dbReference>
<dbReference type="CDD" id="cd15607">
    <property type="entry name" value="PHD2_KDM5B"/>
    <property type="match status" value="1"/>
</dbReference>
<dbReference type="CDD" id="cd15687">
    <property type="entry name" value="PHD3_KDM5B"/>
    <property type="match status" value="1"/>
</dbReference>
<dbReference type="FunFam" id="3.30.40.10:FF:000023">
    <property type="entry name" value="Lysine (K)-specific demethylase 5A"/>
    <property type="match status" value="1"/>
</dbReference>
<dbReference type="FunFam" id="2.60.120.650:FF:000035">
    <property type="entry name" value="PHD transcription factor Rum1"/>
    <property type="match status" value="1"/>
</dbReference>
<dbReference type="FunFam" id="1.10.150.60:FF:000001">
    <property type="entry name" value="Putative lysine-specific demethylase 5b"/>
    <property type="match status" value="1"/>
</dbReference>
<dbReference type="FunFam" id="2.60.120.650:FF:000001">
    <property type="entry name" value="Putative lysine-specific demethylase 5b"/>
    <property type="match status" value="1"/>
</dbReference>
<dbReference type="Gene3D" id="1.10.150.60">
    <property type="entry name" value="ARID DNA-binding domain"/>
    <property type="match status" value="1"/>
</dbReference>
<dbReference type="Gene3D" id="2.60.120.650">
    <property type="entry name" value="Cupin"/>
    <property type="match status" value="1"/>
</dbReference>
<dbReference type="Gene3D" id="3.30.40.10">
    <property type="entry name" value="Zinc/RING finger domain, C3HC4 (zinc finger)"/>
    <property type="match status" value="2"/>
</dbReference>
<dbReference type="InterPro" id="IPR001606">
    <property type="entry name" value="ARID_dom"/>
</dbReference>
<dbReference type="InterPro" id="IPR036431">
    <property type="entry name" value="ARID_dom_sf"/>
</dbReference>
<dbReference type="InterPro" id="IPR003347">
    <property type="entry name" value="JmjC_dom"/>
</dbReference>
<dbReference type="InterPro" id="IPR003349">
    <property type="entry name" value="JmjN"/>
</dbReference>
<dbReference type="InterPro" id="IPR048615">
    <property type="entry name" value="KDM5_C-hel"/>
</dbReference>
<dbReference type="InterPro" id="IPR047981">
    <property type="entry name" value="KDM5B_ARID"/>
</dbReference>
<dbReference type="InterPro" id="IPR047978">
    <property type="entry name" value="KDM5B_PHD1"/>
</dbReference>
<dbReference type="InterPro" id="IPR047979">
    <property type="entry name" value="KDM5B_PHD3"/>
</dbReference>
<dbReference type="InterPro" id="IPR013637">
    <property type="entry name" value="Lys_sp_deMease-like_dom"/>
</dbReference>
<dbReference type="InterPro" id="IPR019786">
    <property type="entry name" value="Zinc_finger_PHD-type_CS"/>
</dbReference>
<dbReference type="InterPro" id="IPR004198">
    <property type="entry name" value="Znf_C5HC2"/>
</dbReference>
<dbReference type="InterPro" id="IPR011011">
    <property type="entry name" value="Znf_FYVE_PHD"/>
</dbReference>
<dbReference type="InterPro" id="IPR001965">
    <property type="entry name" value="Znf_PHD"/>
</dbReference>
<dbReference type="InterPro" id="IPR019787">
    <property type="entry name" value="Znf_PHD-finger"/>
</dbReference>
<dbReference type="InterPro" id="IPR013083">
    <property type="entry name" value="Znf_RING/FYVE/PHD"/>
</dbReference>
<dbReference type="PANTHER" id="PTHR10694">
    <property type="entry name" value="LYSINE-SPECIFIC DEMETHYLASE"/>
    <property type="match status" value="1"/>
</dbReference>
<dbReference type="PANTHER" id="PTHR10694:SF3">
    <property type="entry name" value="LYSINE-SPECIFIC DEMETHYLASE 5B"/>
    <property type="match status" value="1"/>
</dbReference>
<dbReference type="Pfam" id="PF01388">
    <property type="entry name" value="ARID"/>
    <property type="match status" value="1"/>
</dbReference>
<dbReference type="Pfam" id="PF02373">
    <property type="entry name" value="JmjC"/>
    <property type="match status" value="1"/>
</dbReference>
<dbReference type="Pfam" id="PF02375">
    <property type="entry name" value="JmjN"/>
    <property type="match status" value="1"/>
</dbReference>
<dbReference type="Pfam" id="PF21323">
    <property type="entry name" value="KDM5_C-hel"/>
    <property type="match status" value="1"/>
</dbReference>
<dbReference type="Pfam" id="PF00628">
    <property type="entry name" value="PHD"/>
    <property type="match status" value="3"/>
</dbReference>
<dbReference type="Pfam" id="PF08429">
    <property type="entry name" value="PLU-1"/>
    <property type="match status" value="1"/>
</dbReference>
<dbReference type="Pfam" id="PF02928">
    <property type="entry name" value="zf-C5HC2"/>
    <property type="match status" value="1"/>
</dbReference>
<dbReference type="SMART" id="SM01014">
    <property type="entry name" value="ARID"/>
    <property type="match status" value="1"/>
</dbReference>
<dbReference type="SMART" id="SM00501">
    <property type="entry name" value="BRIGHT"/>
    <property type="match status" value="1"/>
</dbReference>
<dbReference type="SMART" id="SM00558">
    <property type="entry name" value="JmjC"/>
    <property type="match status" value="1"/>
</dbReference>
<dbReference type="SMART" id="SM00545">
    <property type="entry name" value="JmjN"/>
    <property type="match status" value="1"/>
</dbReference>
<dbReference type="SMART" id="SM00249">
    <property type="entry name" value="PHD"/>
    <property type="match status" value="3"/>
</dbReference>
<dbReference type="SUPFAM" id="SSF46774">
    <property type="entry name" value="ARID-like"/>
    <property type="match status" value="1"/>
</dbReference>
<dbReference type="SUPFAM" id="SSF51197">
    <property type="entry name" value="Clavaminate synthase-like"/>
    <property type="match status" value="1"/>
</dbReference>
<dbReference type="SUPFAM" id="SSF57903">
    <property type="entry name" value="FYVE/PHD zinc finger"/>
    <property type="match status" value="3"/>
</dbReference>
<dbReference type="PROSITE" id="PS51011">
    <property type="entry name" value="ARID"/>
    <property type="match status" value="1"/>
</dbReference>
<dbReference type="PROSITE" id="PS51184">
    <property type="entry name" value="JMJC"/>
    <property type="match status" value="1"/>
</dbReference>
<dbReference type="PROSITE" id="PS51183">
    <property type="entry name" value="JMJN"/>
    <property type="match status" value="1"/>
</dbReference>
<dbReference type="PROSITE" id="PS01359">
    <property type="entry name" value="ZF_PHD_1"/>
    <property type="match status" value="2"/>
</dbReference>
<dbReference type="PROSITE" id="PS50016">
    <property type="entry name" value="ZF_PHD_2"/>
    <property type="match status" value="3"/>
</dbReference>
<sequence>MAEFLPPPECPVFEPSWEEFADPFAFIHKIRPIAEQTGICKVRPPPDWQPPFACDVDKLHFTPRIQRLNELEAQTRVKLNFLDQIAKFWELQGCTLKIPHVERKILDLFQLNRLVAEEGGFDVVCKERKWTKIATRMGFAPGKAVGSHIRAHYERILYPYNLFQSGASLLCLQKPDLTSDTKDKEYKPHDIPQRQSVQPSESCPPARRAKRLRAEATNIKTESDSPEVRTHNLRRRMGCAPPKCENEKETYSAVKLAEKREHAGEQERDKAKARSKKPTSAVDLYVCLLCGSGNDEDRLLLCDGCDDSYHTFCLIPPLHDVPKGDWRCPQCLAQECNKPQEAFGFEQAARDYTLRTFGEMADAFKSDYFNMPVHMVPTELVEKEFWRLVSTIEEDVTVEYGADIASKEFGSGFPVRDGKFKVRPEEEEYLDSGWNLNNMPVMEQSVLAHITADICGMKLPWLYVGMCFSSFCWHIEDHWSYSINYLHWGEPKTWYGAPGYAAEQLEDVMKKLAPELFESQPDLLHQLVTIMNPNTLMAHGVPVYRTNQCAGEFVITFPRAYHSGFNQGFNFAEAVNFCTVDWLPLGRQCIEHYRLLSRYCVFSHDEMICKMASKADILDVVVASTVQKDMAIMIDDEKMLREKVQKLGVTDSERVAFELFPDDERQCYKCKTTCFMSAVYCPCKPGLLVCLYHVEDLCSCPTYQYKLGYRYTLEELYPMMNALKMRAESYNEWASNVNEALEAKISNKRSLISFKALIEESELKKFPDNDLLRHLRLVTQDADKCASVAQQLLNGKRQTRYRSGGGKCPNQLTVNELRLFVRQLYALPCVLSQTPLLKDLLDRVEAFQQQSQKLLSEEMPSAAELQELLDVSFDFDVDLPQLAELRVRLEQARWLEDVQMASAEQNSLTLDDMRRLIDSGVGLAPYPAVEKAMAKLQELLTVSEHWDDKARNLIKARPRQSLSSLVVAVKEIEEIPAYLPSGAALKDAVQKAQDWLQEVEALQVGGRVPVLDTLVELVTRGRSIPVHLDYLPRLESLVAEVQAWKECAANTFLCENSPYSLLEVLCPRCDIGTLGLKRKQKKLKEPMPSGKKRSTKLESLSDLERALSESKDTASAMATLGEARLKEMEALRSLRAANEGKVLCSEEDAELKVCVCQKEPAAPMIQCELCRGFFHTGCVSVPHALQGPRVWLCPQCRRSEKPPLEKILPLLASLQRIRVRLPEGDALRYMIERTVNWQHRAQQMLYSGNLKLLQDKVGSGLLYNRWQSTAGPLPETNKVSQTIGAMSFSMPHDWDNRTIYLHSPFSTGQQCIPLHVVSTELDELMMEAQLLQVSLPEIQELYQILFTKQSPSLQAEQKPSVGPSNEKSECCRGKKDGMSYMERKLKRRFERESFCDEKRARVRKMRTPKKKKLKLSHTKDVSSSSRMERERERLLEAQRSSESHLVPSDTSFSEQEDSEDEDAICPAVTCLQPEGEEVDWVQCDGSCNQWFHQVCVGISPEMAEKEDYICASCAGKGSPYRK</sequence>
<accession>Q5F3R2</accession>
<evidence type="ECO:0000250" key="1"/>
<evidence type="ECO:0000250" key="2">
    <source>
        <dbReference type="UniProtKB" id="P29375"/>
    </source>
</evidence>
<evidence type="ECO:0000250" key="3">
    <source>
        <dbReference type="UniProtKB" id="Q80Y84"/>
    </source>
</evidence>
<evidence type="ECO:0000250" key="4">
    <source>
        <dbReference type="UniProtKB" id="Q9UGL1"/>
    </source>
</evidence>
<evidence type="ECO:0000255" key="5">
    <source>
        <dbReference type="PROSITE-ProRule" id="PRU00146"/>
    </source>
</evidence>
<evidence type="ECO:0000255" key="6">
    <source>
        <dbReference type="PROSITE-ProRule" id="PRU00355"/>
    </source>
</evidence>
<evidence type="ECO:0000255" key="7">
    <source>
        <dbReference type="PROSITE-ProRule" id="PRU00537"/>
    </source>
</evidence>
<evidence type="ECO:0000255" key="8">
    <source>
        <dbReference type="PROSITE-ProRule" id="PRU00538"/>
    </source>
</evidence>
<evidence type="ECO:0000256" key="9">
    <source>
        <dbReference type="SAM" id="MobiDB-lite"/>
    </source>
</evidence>
<evidence type="ECO:0000305" key="10"/>